<reference key="1">
    <citation type="submission" date="2007-03" db="EMBL/GenBank/DDBJ databases">
        <title>Complete sequence of Shewanella loihica PV-4.</title>
        <authorList>
            <consortium name="US DOE Joint Genome Institute"/>
            <person name="Copeland A."/>
            <person name="Lucas S."/>
            <person name="Lapidus A."/>
            <person name="Barry K."/>
            <person name="Detter J.C."/>
            <person name="Glavina del Rio T."/>
            <person name="Hammon N."/>
            <person name="Israni S."/>
            <person name="Dalin E."/>
            <person name="Tice H."/>
            <person name="Pitluck S."/>
            <person name="Chain P."/>
            <person name="Malfatti S."/>
            <person name="Shin M."/>
            <person name="Vergez L."/>
            <person name="Schmutz J."/>
            <person name="Larimer F."/>
            <person name="Land M."/>
            <person name="Hauser L."/>
            <person name="Kyrpides N."/>
            <person name="Mikhailova N."/>
            <person name="Romine M.F."/>
            <person name="Serres G."/>
            <person name="Fredrickson J."/>
            <person name="Tiedje J."/>
            <person name="Richardson P."/>
        </authorList>
    </citation>
    <scope>NUCLEOTIDE SEQUENCE [LARGE SCALE GENOMIC DNA]</scope>
    <source>
        <strain>ATCC BAA-1088 / PV-4</strain>
    </source>
</reference>
<protein>
    <recommendedName>
        <fullName evidence="1">RNA polymerase-associated protein RapA</fullName>
        <ecNumber evidence="1">3.6.4.-</ecNumber>
    </recommendedName>
    <alternativeName>
        <fullName evidence="1">ATP-dependent helicase HepA</fullName>
    </alternativeName>
</protein>
<dbReference type="EC" id="3.6.4.-" evidence="1"/>
<dbReference type="EMBL" id="CP000606">
    <property type="protein sequence ID" value="ABO22329.1"/>
    <property type="molecule type" value="Genomic_DNA"/>
</dbReference>
<dbReference type="RefSeq" id="WP_011864263.1">
    <property type="nucleotide sequence ID" value="NC_009092.1"/>
</dbReference>
<dbReference type="SMR" id="A3QA31"/>
<dbReference type="STRING" id="323850.Shew_0457"/>
<dbReference type="KEGG" id="slo:Shew_0457"/>
<dbReference type="eggNOG" id="COG0553">
    <property type="taxonomic scope" value="Bacteria"/>
</dbReference>
<dbReference type="HOGENOM" id="CLU_011520_0_0_6"/>
<dbReference type="OrthoDB" id="9814088at2"/>
<dbReference type="Proteomes" id="UP000001558">
    <property type="component" value="Chromosome"/>
</dbReference>
<dbReference type="GO" id="GO:0005524">
    <property type="term" value="F:ATP binding"/>
    <property type="evidence" value="ECO:0007669"/>
    <property type="project" value="UniProtKB-UniRule"/>
</dbReference>
<dbReference type="GO" id="GO:0003677">
    <property type="term" value="F:DNA binding"/>
    <property type="evidence" value="ECO:0007669"/>
    <property type="project" value="UniProtKB-KW"/>
</dbReference>
<dbReference type="GO" id="GO:0004386">
    <property type="term" value="F:helicase activity"/>
    <property type="evidence" value="ECO:0007669"/>
    <property type="project" value="UniProtKB-UniRule"/>
</dbReference>
<dbReference type="GO" id="GO:0016817">
    <property type="term" value="F:hydrolase activity, acting on acid anhydrides"/>
    <property type="evidence" value="ECO:0007669"/>
    <property type="project" value="InterPro"/>
</dbReference>
<dbReference type="GO" id="GO:0006355">
    <property type="term" value="P:regulation of DNA-templated transcription"/>
    <property type="evidence" value="ECO:0007669"/>
    <property type="project" value="UniProtKB-UniRule"/>
</dbReference>
<dbReference type="CDD" id="cd18011">
    <property type="entry name" value="DEXDc_RapA"/>
    <property type="match status" value="1"/>
</dbReference>
<dbReference type="CDD" id="cd18793">
    <property type="entry name" value="SF2_C_SNF"/>
    <property type="match status" value="1"/>
</dbReference>
<dbReference type="Gene3D" id="2.30.30.140">
    <property type="match status" value="1"/>
</dbReference>
<dbReference type="Gene3D" id="2.30.30.930">
    <property type="match status" value="1"/>
</dbReference>
<dbReference type="Gene3D" id="3.30.360.80">
    <property type="match status" value="1"/>
</dbReference>
<dbReference type="Gene3D" id="6.10.140.1500">
    <property type="match status" value="1"/>
</dbReference>
<dbReference type="Gene3D" id="6.10.140.2230">
    <property type="match status" value="1"/>
</dbReference>
<dbReference type="Gene3D" id="3.40.50.300">
    <property type="entry name" value="P-loop containing nucleotide triphosphate hydrolases"/>
    <property type="match status" value="1"/>
</dbReference>
<dbReference type="Gene3D" id="3.40.50.10810">
    <property type="entry name" value="Tandem AAA-ATPase domain"/>
    <property type="match status" value="1"/>
</dbReference>
<dbReference type="HAMAP" id="MF_01821">
    <property type="entry name" value="Helicase_RapA"/>
    <property type="match status" value="1"/>
</dbReference>
<dbReference type="InterPro" id="IPR014001">
    <property type="entry name" value="Helicase_ATP-bd"/>
</dbReference>
<dbReference type="InterPro" id="IPR001650">
    <property type="entry name" value="Helicase_C-like"/>
</dbReference>
<dbReference type="InterPro" id="IPR023949">
    <property type="entry name" value="Helicase_RapA"/>
</dbReference>
<dbReference type="InterPro" id="IPR027417">
    <property type="entry name" value="P-loop_NTPase"/>
</dbReference>
<dbReference type="InterPro" id="IPR022737">
    <property type="entry name" value="RapA_C"/>
</dbReference>
<dbReference type="InterPro" id="IPR038718">
    <property type="entry name" value="SNF2-like_sf"/>
</dbReference>
<dbReference type="InterPro" id="IPR049730">
    <property type="entry name" value="SNF2/RAD54-like_C"/>
</dbReference>
<dbReference type="InterPro" id="IPR000330">
    <property type="entry name" value="SNF2_N"/>
</dbReference>
<dbReference type="InterPro" id="IPR040765">
    <property type="entry name" value="Tudor_1_RapA"/>
</dbReference>
<dbReference type="InterPro" id="IPR040766">
    <property type="entry name" value="Tudor_2_RapA"/>
</dbReference>
<dbReference type="NCBIfam" id="NF003426">
    <property type="entry name" value="PRK04914.1"/>
    <property type="match status" value="1"/>
</dbReference>
<dbReference type="PANTHER" id="PTHR45766">
    <property type="entry name" value="DNA ANNEALING HELICASE AND ENDONUCLEASE ZRANB3 FAMILY MEMBER"/>
    <property type="match status" value="1"/>
</dbReference>
<dbReference type="PANTHER" id="PTHR45766:SF6">
    <property type="entry name" value="SWI_SNF-RELATED MATRIX-ASSOCIATED ACTIN-DEPENDENT REGULATOR OF CHROMATIN SUBFAMILY A-LIKE PROTEIN 1"/>
    <property type="match status" value="1"/>
</dbReference>
<dbReference type="Pfam" id="PF00271">
    <property type="entry name" value="Helicase_C"/>
    <property type="match status" value="1"/>
</dbReference>
<dbReference type="Pfam" id="PF12137">
    <property type="entry name" value="RapA_C"/>
    <property type="match status" value="1"/>
</dbReference>
<dbReference type="Pfam" id="PF00176">
    <property type="entry name" value="SNF2-rel_dom"/>
    <property type="match status" value="1"/>
</dbReference>
<dbReference type="Pfam" id="PF18339">
    <property type="entry name" value="Tudor_1_RapA"/>
    <property type="match status" value="1"/>
</dbReference>
<dbReference type="Pfam" id="PF18337">
    <property type="entry name" value="Tudor_RapA"/>
    <property type="match status" value="1"/>
</dbReference>
<dbReference type="SMART" id="SM00487">
    <property type="entry name" value="DEXDc"/>
    <property type="match status" value="1"/>
</dbReference>
<dbReference type="SMART" id="SM00490">
    <property type="entry name" value="HELICc"/>
    <property type="match status" value="1"/>
</dbReference>
<dbReference type="SUPFAM" id="SSF52540">
    <property type="entry name" value="P-loop containing nucleoside triphosphate hydrolases"/>
    <property type="match status" value="2"/>
</dbReference>
<dbReference type="PROSITE" id="PS51192">
    <property type="entry name" value="HELICASE_ATP_BIND_1"/>
    <property type="match status" value="1"/>
</dbReference>
<dbReference type="PROSITE" id="PS51194">
    <property type="entry name" value="HELICASE_CTER"/>
    <property type="match status" value="1"/>
</dbReference>
<feature type="chain" id="PRO_1000088384" description="RNA polymerase-associated protein RapA">
    <location>
        <begin position="1"/>
        <end position="968"/>
    </location>
</feature>
<feature type="domain" description="Helicase ATP-binding" evidence="1">
    <location>
        <begin position="163"/>
        <end position="332"/>
    </location>
</feature>
<feature type="domain" description="Helicase C-terminal" evidence="1">
    <location>
        <begin position="491"/>
        <end position="645"/>
    </location>
</feature>
<feature type="short sequence motif" description="DEAH box">
    <location>
        <begin position="278"/>
        <end position="281"/>
    </location>
</feature>
<feature type="binding site" evidence="1">
    <location>
        <begin position="176"/>
        <end position="183"/>
    </location>
    <ligand>
        <name>ATP</name>
        <dbReference type="ChEBI" id="CHEBI:30616"/>
    </ligand>
</feature>
<comment type="function">
    <text evidence="1">Transcription regulator that activates transcription by stimulating RNA polymerase (RNAP) recycling in case of stress conditions such as supercoiled DNA or high salt concentrations. Probably acts by releasing the RNAP, when it is trapped or immobilized on tightly supercoiled DNA. Does not activate transcription on linear DNA. Probably not involved in DNA repair.</text>
</comment>
<comment type="subunit">
    <text evidence="1">Interacts with the RNAP. Has a higher affinity for the core RNAP than for the holoenzyme. Its ATPase activity is stimulated by binding to RNAP.</text>
</comment>
<comment type="similarity">
    <text evidence="1">Belongs to the SNF2/RAD54 helicase family. RapA subfamily.</text>
</comment>
<proteinExistence type="inferred from homology"/>
<accession>A3QA31</accession>
<evidence type="ECO:0000255" key="1">
    <source>
        <dbReference type="HAMAP-Rule" id="MF_01821"/>
    </source>
</evidence>
<gene>
    <name evidence="1" type="primary">rapA</name>
    <name type="ordered locus">Shew_0457</name>
</gene>
<sequence>MPFSLGQRWISDTESELGLGTVIGLEGRMVTLMFPATDENRMFARDDAPLTRVIYNPGDIIESHEGWSLKVSEIEEKNQLVIYHGIHTETGEEVSLRETLLNHNIRFNKPQDRLFAGQIDRLDRFGVRYQSQLLRHKLATSDLLGLQGPRVGLIPHQQWIAHEVGQRFAPRVLLADEVGLGKTIEAGLIIHQQLLTGRAERILIIVPDTLRHQWLVEMLRRFNLRFSVFDEDRCVEAYADHDNPFYTEQLVICSLELLRKKKRLDQALDADWDLMVVDEAHHLEWTEEEPSRAYRVVEALSEVVPGVLLLTATPDQLGHQSHFARLRLLDPDRFYDYQAFLKEEESYKEVASAADALASGKRLPDEAVASLTELLNEKDITPALRLIEDESVDNEQRDQARSELLQELLDRHGTGRVLYRNSRASVKGFPTRIFNAHPQTMPAQYKTAARVSDMMGGQTDLTAKVKQALSPEKLYQAFESDSASWWKFDPRVDWLIDFLKNHRSKKVLIIASQAETALSLEEALRTREGIQATVFHEGMSIIERDKAGAYFAQESGGAQALICSEIGSEGRNFQFASHLVLFDLPLNPDLLEQRIGRLDRIGQANDVEIHLPYLANTAQENLMNWYHKGLNAFEQTCPTGHILFNEFSEELLTQLVYRDEDKFTQLLNHTQSRYKALKKAMEQGRDKLLEINSHGGDKAQKLVENLAARDQDTQLIGSVIRLWDIIGVEQEDSGENAIVLHPSEHMMFPTYPGLPEDGITVTFDREMALSRDDIALITQEHPLVQTGLDLITSSETGTTSVAVLKNKALPAGTIFLELIYMADASAPRSSQLYRYMPPTPVRVLLDKNGNNLSQNVSYESFDKQLSAVNRHIASKLVNASQTLLHPLFAKGEEFAQAAMKQLTEEASNKMTQQLTAELERLEALKAVNPNIRDEELEHLRNQMVELGNYLDACQLQLDAVRLVLVSHA</sequence>
<keyword id="KW-0010">Activator</keyword>
<keyword id="KW-0067">ATP-binding</keyword>
<keyword id="KW-0238">DNA-binding</keyword>
<keyword id="KW-0347">Helicase</keyword>
<keyword id="KW-0378">Hydrolase</keyword>
<keyword id="KW-0547">Nucleotide-binding</keyword>
<keyword id="KW-1185">Reference proteome</keyword>
<keyword id="KW-0804">Transcription</keyword>
<keyword id="KW-0805">Transcription regulation</keyword>
<name>RAPA_SHELP</name>
<organism>
    <name type="scientific">Shewanella loihica (strain ATCC BAA-1088 / PV-4)</name>
    <dbReference type="NCBI Taxonomy" id="323850"/>
    <lineage>
        <taxon>Bacteria</taxon>
        <taxon>Pseudomonadati</taxon>
        <taxon>Pseudomonadota</taxon>
        <taxon>Gammaproteobacteria</taxon>
        <taxon>Alteromonadales</taxon>
        <taxon>Shewanellaceae</taxon>
        <taxon>Shewanella</taxon>
    </lineage>
</organism>